<evidence type="ECO:0000255" key="1"/>
<evidence type="ECO:0000255" key="2">
    <source>
        <dbReference type="PROSITE-ProRule" id="PRU00521"/>
    </source>
</evidence>
<evidence type="ECO:0000269" key="3">
    <source>
    </source>
</evidence>
<evidence type="ECO:0000303" key="4">
    <source>
    </source>
</evidence>
<evidence type="ECO:0000305" key="5"/>
<evidence type="ECO:0000312" key="6">
    <source>
        <dbReference type="EMBL" id="AAD13315.1"/>
    </source>
</evidence>
<evidence type="ECO:0000312" key="7">
    <source>
        <dbReference type="EMBL" id="AAI45892.1"/>
    </source>
</evidence>
<evidence type="ECO:0000312" key="8">
    <source>
        <dbReference type="EMBL" id="AAL61277.1"/>
    </source>
</evidence>
<evidence type="ECO:0000312" key="9">
    <source>
        <dbReference type="EMBL" id="AAP71780.1"/>
    </source>
</evidence>
<evidence type="ECO:0000312" key="10">
    <source>
        <dbReference type="EMBL" id="EDL36361.1"/>
    </source>
</evidence>
<evidence type="ECO:0000312" key="11">
    <source>
        <dbReference type="MGI" id="MGI:1333764"/>
    </source>
</evidence>
<proteinExistence type="evidence at transcript level"/>
<comment type="function">
    <text evidence="3">Odorant receptor. Activated by (-)-citronellal and to a lesser extent by (+)-citronellal. Not activated by carvone or limonene.</text>
</comment>
<comment type="subcellular location">
    <subcellularLocation>
        <location evidence="5">Cell membrane</location>
        <topology evidence="1">Multi-pass membrane protein</topology>
    </subcellularLocation>
</comment>
<comment type="similarity">
    <text evidence="2">Belongs to the G-protein coupled receptor 1 family.</text>
</comment>
<dbReference type="EMBL" id="AF102523">
    <property type="protein sequence ID" value="AAD13315.1"/>
    <property type="molecule type" value="Genomic_DNA"/>
</dbReference>
<dbReference type="EMBL" id="AY073614">
    <property type="protein sequence ID" value="AAL61277.1"/>
    <property type="molecule type" value="Genomic_DNA"/>
</dbReference>
<dbReference type="EMBL" id="AY318614">
    <property type="protein sequence ID" value="AAP71780.1"/>
    <property type="molecule type" value="Genomic_DNA"/>
</dbReference>
<dbReference type="EMBL" id="CT573018">
    <property type="status" value="NOT_ANNOTATED_CDS"/>
    <property type="molecule type" value="Genomic_DNA"/>
</dbReference>
<dbReference type="EMBL" id="CH466535">
    <property type="protein sequence ID" value="EDL36361.1"/>
    <property type="molecule type" value="Genomic_DNA"/>
</dbReference>
<dbReference type="EMBL" id="BC145891">
    <property type="protein sequence ID" value="AAI45892.1"/>
    <property type="molecule type" value="mRNA"/>
</dbReference>
<dbReference type="EMBL" id="BC145893">
    <property type="protein sequence ID" value="AAI45894.1"/>
    <property type="molecule type" value="mRNA"/>
</dbReference>
<dbReference type="CCDS" id="CCDS27085.1"/>
<dbReference type="RefSeq" id="NP_035121.1">
    <property type="nucleotide sequence ID" value="NM_010991.2"/>
</dbReference>
<dbReference type="SMR" id="Q9Z1V0"/>
<dbReference type="FunCoup" id="Q9Z1V0">
    <property type="interactions" value="1267"/>
</dbReference>
<dbReference type="STRING" id="10090.ENSMUSP00000149840"/>
<dbReference type="GlyCosmos" id="Q9Z1V0">
    <property type="glycosylation" value="1 site, No reported glycans"/>
</dbReference>
<dbReference type="GlyGen" id="Q9Z1V0">
    <property type="glycosylation" value="1 site"/>
</dbReference>
<dbReference type="PaxDb" id="10090-ENSMUSP00000054361"/>
<dbReference type="Ensembl" id="ENSMUST00000059996.7">
    <property type="protein sequence ID" value="ENSMUSP00000054361.5"/>
    <property type="gene ID" value="ENSMUSG00000048153.7"/>
</dbReference>
<dbReference type="Ensembl" id="ENSMUST00000216214.2">
    <property type="protein sequence ID" value="ENSMUSP00000149840.2"/>
    <property type="gene ID" value="ENSMUSG00000048153.7"/>
</dbReference>
<dbReference type="GeneID" id="18348"/>
<dbReference type="KEGG" id="mmu:18348"/>
<dbReference type="UCSC" id="uc007tvs.2">
    <property type="organism name" value="mouse"/>
</dbReference>
<dbReference type="AGR" id="MGI:1333764"/>
<dbReference type="CTD" id="18348"/>
<dbReference type="MGI" id="MGI:1333764">
    <property type="gene designation" value="Or6e1"/>
</dbReference>
<dbReference type="VEuPathDB" id="HostDB:ENSMUSG00000048153"/>
<dbReference type="eggNOG" id="ENOG502RDVH">
    <property type="taxonomic scope" value="Eukaryota"/>
</dbReference>
<dbReference type="GeneTree" id="ENSGT01130000278306"/>
<dbReference type="HOGENOM" id="CLU_012526_1_0_1"/>
<dbReference type="InParanoid" id="Q9Z1V0"/>
<dbReference type="OMA" id="ITLMDRC"/>
<dbReference type="OrthoDB" id="9709639at2759"/>
<dbReference type="PhylomeDB" id="Q9Z1V0"/>
<dbReference type="TreeFam" id="TF336833"/>
<dbReference type="BioGRID-ORCS" id="18348">
    <property type="hits" value="3 hits in 71 CRISPR screens"/>
</dbReference>
<dbReference type="PRO" id="PR:Q9Z1V0"/>
<dbReference type="Proteomes" id="UP000000589">
    <property type="component" value="Chromosome 14"/>
</dbReference>
<dbReference type="RNAct" id="Q9Z1V0">
    <property type="molecule type" value="protein"/>
</dbReference>
<dbReference type="Bgee" id="ENSMUSG00000048153">
    <property type="expression patterns" value="Expressed in dorsal root ganglion and 5 other cell types or tissues"/>
</dbReference>
<dbReference type="GO" id="GO:0016020">
    <property type="term" value="C:membrane"/>
    <property type="evidence" value="ECO:0000247"/>
    <property type="project" value="MGI"/>
</dbReference>
<dbReference type="GO" id="GO:0005886">
    <property type="term" value="C:plasma membrane"/>
    <property type="evidence" value="ECO:0007669"/>
    <property type="project" value="UniProtKB-SubCell"/>
</dbReference>
<dbReference type="GO" id="GO:0004930">
    <property type="term" value="F:G protein-coupled receptor activity"/>
    <property type="evidence" value="ECO:0007669"/>
    <property type="project" value="UniProtKB-KW"/>
</dbReference>
<dbReference type="GO" id="GO:0019840">
    <property type="term" value="F:isoprenoid binding"/>
    <property type="evidence" value="ECO:0000314"/>
    <property type="project" value="MGI"/>
</dbReference>
<dbReference type="GO" id="GO:0004984">
    <property type="term" value="F:olfactory receptor activity"/>
    <property type="evidence" value="ECO:0000314"/>
    <property type="project" value="MGI"/>
</dbReference>
<dbReference type="GO" id="GO:0007186">
    <property type="term" value="P:G protein-coupled receptor signaling pathway"/>
    <property type="evidence" value="ECO:0000247"/>
    <property type="project" value="MGI"/>
</dbReference>
<dbReference type="GO" id="GO:0007608">
    <property type="term" value="P:sensory perception of smell"/>
    <property type="evidence" value="ECO:0000247"/>
    <property type="project" value="MGI"/>
</dbReference>
<dbReference type="CDD" id="cd15912">
    <property type="entry name" value="7tmA_OR6C-like"/>
    <property type="match status" value="1"/>
</dbReference>
<dbReference type="FunFam" id="1.20.1070.10:FF:000010">
    <property type="entry name" value="Olfactory receptor"/>
    <property type="match status" value="1"/>
</dbReference>
<dbReference type="Gene3D" id="1.20.1070.10">
    <property type="entry name" value="Rhodopsin 7-helix transmembrane proteins"/>
    <property type="match status" value="1"/>
</dbReference>
<dbReference type="InterPro" id="IPR000276">
    <property type="entry name" value="GPCR_Rhodpsn"/>
</dbReference>
<dbReference type="InterPro" id="IPR017452">
    <property type="entry name" value="GPCR_Rhodpsn_7TM"/>
</dbReference>
<dbReference type="InterPro" id="IPR000725">
    <property type="entry name" value="Olfact_rcpt"/>
</dbReference>
<dbReference type="InterPro" id="IPR047132">
    <property type="entry name" value="Olfact_rcpt_6C-like"/>
</dbReference>
<dbReference type="PANTHER" id="PTHR26454">
    <property type="entry name" value="OLFACTORY RECEPTOR"/>
    <property type="match status" value="1"/>
</dbReference>
<dbReference type="PANTHER" id="PTHR26454:SF2">
    <property type="entry name" value="OLFACTORY RECEPTOR 6E1"/>
    <property type="match status" value="1"/>
</dbReference>
<dbReference type="Pfam" id="PF13853">
    <property type="entry name" value="7tm_4"/>
    <property type="match status" value="1"/>
</dbReference>
<dbReference type="PRINTS" id="PR00237">
    <property type="entry name" value="GPCRRHODOPSN"/>
</dbReference>
<dbReference type="PRINTS" id="PR00245">
    <property type="entry name" value="OLFACTORYR"/>
</dbReference>
<dbReference type="SUPFAM" id="SSF81321">
    <property type="entry name" value="Family A G protein-coupled receptor-like"/>
    <property type="match status" value="1"/>
</dbReference>
<dbReference type="PROSITE" id="PS00237">
    <property type="entry name" value="G_PROTEIN_RECEP_F1_1"/>
    <property type="match status" value="1"/>
</dbReference>
<dbReference type="PROSITE" id="PS50262">
    <property type="entry name" value="G_PROTEIN_RECEP_F1_2"/>
    <property type="match status" value="1"/>
</dbReference>
<organism>
    <name type="scientific">Mus musculus</name>
    <name type="common">Mouse</name>
    <dbReference type="NCBI Taxonomy" id="10090"/>
    <lineage>
        <taxon>Eukaryota</taxon>
        <taxon>Metazoa</taxon>
        <taxon>Chordata</taxon>
        <taxon>Craniata</taxon>
        <taxon>Vertebrata</taxon>
        <taxon>Euteleostomi</taxon>
        <taxon>Mammalia</taxon>
        <taxon>Eutheria</taxon>
        <taxon>Euarchontoglires</taxon>
        <taxon>Glires</taxon>
        <taxon>Rodentia</taxon>
        <taxon>Myomorpha</taxon>
        <taxon>Muroidea</taxon>
        <taxon>Muridae</taxon>
        <taxon>Murinae</taxon>
        <taxon>Mus</taxon>
        <taxon>Mus</taxon>
    </lineage>
</organism>
<reference evidence="5 6" key="1">
    <citation type="journal article" date="1998" name="Cell">
        <title>Identification of ligands for olfactory receptors by functional expression of a receptor library.</title>
        <authorList>
            <person name="Krautwurst D."/>
            <person name="Yau K.W."/>
            <person name="Reed R.R."/>
        </authorList>
    </citation>
    <scope>NUCLEOTIDE SEQUENCE [GENOMIC DNA]</scope>
    <scope>FUNCTION</scope>
    <source>
        <strain evidence="6">129/SvJ</strain>
    </source>
</reference>
<reference evidence="8" key="2">
    <citation type="journal article" date="2002" name="Nat. Neurosci.">
        <title>The olfactory receptor gene superfamily of the mouse.</title>
        <authorList>
            <person name="Zhang X."/>
            <person name="Firestein S."/>
        </authorList>
    </citation>
    <scope>NUCLEOTIDE SEQUENCE [GENOMIC DNA]</scope>
</reference>
<reference evidence="9" key="3">
    <citation type="journal article" date="2003" name="Genome Biol.">
        <title>Odorant receptor expressed sequence tags demonstrate olfactory expression of over 400 genes, extensive alternate splicing and unequal expression levels.</title>
        <authorList>
            <person name="Young J.M."/>
            <person name="Shykind B.M."/>
            <person name="Lane R.P."/>
            <person name="Tonnes-Priddy L."/>
            <person name="Ross J.A."/>
            <person name="Walker M."/>
            <person name="Williams E.M."/>
            <person name="Trask B.J."/>
        </authorList>
    </citation>
    <scope>NUCLEOTIDE SEQUENCE [GENOMIC DNA]</scope>
</reference>
<reference key="4">
    <citation type="journal article" date="2009" name="PLoS Biol.">
        <title>Lineage-specific biology revealed by a finished genome assembly of the mouse.</title>
        <authorList>
            <person name="Church D.M."/>
            <person name="Goodstadt L."/>
            <person name="Hillier L.W."/>
            <person name="Zody M.C."/>
            <person name="Goldstein S."/>
            <person name="She X."/>
            <person name="Bult C.J."/>
            <person name="Agarwala R."/>
            <person name="Cherry J.L."/>
            <person name="DiCuccio M."/>
            <person name="Hlavina W."/>
            <person name="Kapustin Y."/>
            <person name="Meric P."/>
            <person name="Maglott D."/>
            <person name="Birtle Z."/>
            <person name="Marques A.C."/>
            <person name="Graves T."/>
            <person name="Zhou S."/>
            <person name="Teague B."/>
            <person name="Potamousis K."/>
            <person name="Churas C."/>
            <person name="Place M."/>
            <person name="Herschleb J."/>
            <person name="Runnheim R."/>
            <person name="Forrest D."/>
            <person name="Amos-Landgraf J."/>
            <person name="Schwartz D.C."/>
            <person name="Cheng Z."/>
            <person name="Lindblad-Toh K."/>
            <person name="Eichler E.E."/>
            <person name="Ponting C.P."/>
        </authorList>
    </citation>
    <scope>NUCLEOTIDE SEQUENCE [LARGE SCALE GENOMIC DNA]</scope>
    <source>
        <strain>C57BL/6J</strain>
    </source>
</reference>
<reference evidence="10" key="5">
    <citation type="submission" date="2005-09" db="EMBL/GenBank/DDBJ databases">
        <authorList>
            <person name="Mural R.J."/>
            <person name="Adams M.D."/>
            <person name="Myers E.W."/>
            <person name="Smith H.O."/>
            <person name="Venter J.C."/>
        </authorList>
    </citation>
    <scope>NUCLEOTIDE SEQUENCE [LARGE SCALE GENOMIC DNA]</scope>
</reference>
<reference evidence="7" key="6">
    <citation type="journal article" date="2004" name="Genome Res.">
        <title>The status, quality, and expansion of the NIH full-length cDNA project: the Mammalian Gene Collection (MGC).</title>
        <authorList>
            <consortium name="The MGC Project Team"/>
        </authorList>
    </citation>
    <scope>NUCLEOTIDE SEQUENCE [LARGE SCALE MRNA]</scope>
</reference>
<protein>
    <recommendedName>
        <fullName evidence="5">Olfactory receptor 6E1</fullName>
    </recommendedName>
    <alternativeName>
        <fullName>Olfactory receptor 118-1</fullName>
    </alternativeName>
    <alternativeName>
        <fullName evidence="10">Olfactory receptor 49</fullName>
    </alternativeName>
    <alternativeName>
        <fullName evidence="4">Olfactory receptor I-C6</fullName>
    </alternativeName>
</protein>
<gene>
    <name evidence="11" type="primary">Or6e1</name>
    <name evidence="8 11" type="synonym">Mor118-1</name>
    <name evidence="9 11" type="synonym">Olfr49</name>
</gene>
<keyword id="KW-1003">Cell membrane</keyword>
<keyword id="KW-1015">Disulfide bond</keyword>
<keyword id="KW-0297">G-protein coupled receptor</keyword>
<keyword id="KW-0325">Glycoprotein</keyword>
<keyword id="KW-0472">Membrane</keyword>
<keyword id="KW-0552">Olfaction</keyword>
<keyword id="KW-0675">Receptor</keyword>
<keyword id="KW-1185">Reference proteome</keyword>
<keyword id="KW-0716">Sensory transduction</keyword>
<keyword id="KW-0807">Transducer</keyword>
<keyword id="KW-0812">Transmembrane</keyword>
<keyword id="KW-1133">Transmembrane helix</keyword>
<accession>Q9Z1V0</accession>
<accession>Q8VFB7</accession>
<feature type="chain" id="PRO_0000422153" description="Olfactory receptor 6E1">
    <location>
        <begin position="1"/>
        <end position="313"/>
    </location>
</feature>
<feature type="transmembrane region" description="Helical" evidence="1">
    <location>
        <begin position="25"/>
        <end position="45"/>
    </location>
</feature>
<feature type="transmembrane region" description="Helical" evidence="1">
    <location>
        <begin position="64"/>
        <end position="84"/>
    </location>
</feature>
<feature type="transmembrane region" description="Helical" evidence="1">
    <location>
        <begin position="96"/>
        <end position="116"/>
    </location>
</feature>
<feature type="transmembrane region" description="Helical" evidence="1">
    <location>
        <begin position="142"/>
        <end position="162"/>
    </location>
</feature>
<feature type="transmembrane region" description="Helical" evidence="1">
    <location>
        <begin position="192"/>
        <end position="212"/>
    </location>
</feature>
<feature type="transmembrane region" description="Helical" evidence="1">
    <location>
        <begin position="238"/>
        <end position="258"/>
    </location>
</feature>
<feature type="transmembrane region" description="Helical" evidence="1">
    <location>
        <begin position="271"/>
        <end position="291"/>
    </location>
</feature>
<feature type="glycosylation site" description="N-linked (GlcNAc...) asparagine" evidence="1">
    <location>
        <position position="3"/>
    </location>
</feature>
<feature type="disulfide bond" evidence="2">
    <location>
        <begin position="95"/>
        <end position="177"/>
    </location>
</feature>
<feature type="sequence conflict" description="In Ref. 2; AAL61277, 3; AAP71780 and 5; EDL36361." evidence="5" ref="2 3 5">
    <original>V</original>
    <variation>A</variation>
    <location>
        <position position="49"/>
    </location>
</feature>
<sequence>MANSTTVTEFILLGLSDACELQVLIFLGFLLTYFLILLGNFLIIFITLVDRRLYTPMYYFLRNFAMLEIWFTSVIFPKMLTNIITGHKTISLLGCFLQAFLYFFLGTTEFFLLAVMSFDRYVAICNPLRYATIMSKRVCVQLVFCSWMSGLLLIIVPSSIVFQQPFCGPNIINHFFCDNFPLMELICADTSLVEFLGFVIANFSLLGTLAVTATCYGHILYTILHIPSAKERKKAFSTCSSHIIVVSLFYGSCIFMYVRSGKNGQGEDHNKVVALLNTVVTPTLNPFIYTLRNKQVKQVFREHVSKFQKFSQT</sequence>
<name>OR6E1_MOUSE</name>